<sequence length="165" mass="17301">MMFATTDLCDAHEDRLAAGTLRVLEPVFRPFGGVRRFAGPAATLKLFEDNSLVRTALEQDGAGRVLVVDGGGSLRCALVGGNLGKLAEKNGWAGIVVNGCVRDSDELAECRVGVLALAAHPRKSDKRGAGVSDAPVDVRGTRIVPGDWIYADADGVLVSDDALLE</sequence>
<dbReference type="EC" id="4.1.3.17"/>
<dbReference type="EC" id="4.1.1.112"/>
<dbReference type="EMBL" id="BX571965">
    <property type="protein sequence ID" value="CAH36196.1"/>
    <property type="molecule type" value="Genomic_DNA"/>
</dbReference>
<dbReference type="RefSeq" id="YP_108789.1">
    <property type="nucleotide sequence ID" value="NC_006350.1"/>
</dbReference>
<dbReference type="SMR" id="Q63SX7"/>
<dbReference type="STRING" id="272560.BPSL2194"/>
<dbReference type="KEGG" id="bps:BPSL2194"/>
<dbReference type="PATRIC" id="fig|272560.51.peg.3254"/>
<dbReference type="eggNOG" id="COG0684">
    <property type="taxonomic scope" value="Bacteria"/>
</dbReference>
<dbReference type="Proteomes" id="UP000000605">
    <property type="component" value="Chromosome 1"/>
</dbReference>
<dbReference type="GO" id="GO:0047443">
    <property type="term" value="F:4-hydroxy-4-methyl-2-oxoglutarate aldolase activity"/>
    <property type="evidence" value="ECO:0007669"/>
    <property type="project" value="UniProtKB-EC"/>
</dbReference>
<dbReference type="GO" id="GO:0046872">
    <property type="term" value="F:metal ion binding"/>
    <property type="evidence" value="ECO:0007669"/>
    <property type="project" value="UniProtKB-KW"/>
</dbReference>
<dbReference type="GO" id="GO:0008948">
    <property type="term" value="F:oxaloacetate decarboxylase activity"/>
    <property type="evidence" value="ECO:0007669"/>
    <property type="project" value="UniProtKB-EC"/>
</dbReference>
<dbReference type="GO" id="GO:0008428">
    <property type="term" value="F:ribonuclease inhibitor activity"/>
    <property type="evidence" value="ECO:0007669"/>
    <property type="project" value="InterPro"/>
</dbReference>
<dbReference type="GO" id="GO:0051252">
    <property type="term" value="P:regulation of RNA metabolic process"/>
    <property type="evidence" value="ECO:0007669"/>
    <property type="project" value="InterPro"/>
</dbReference>
<dbReference type="CDD" id="cd16841">
    <property type="entry name" value="RraA_family"/>
    <property type="match status" value="1"/>
</dbReference>
<dbReference type="Gene3D" id="3.50.30.40">
    <property type="entry name" value="Ribonuclease E inhibitor RraA/RraA-like"/>
    <property type="match status" value="1"/>
</dbReference>
<dbReference type="InterPro" id="IPR010203">
    <property type="entry name" value="RraA"/>
</dbReference>
<dbReference type="InterPro" id="IPR005493">
    <property type="entry name" value="RraA/RraA-like"/>
</dbReference>
<dbReference type="InterPro" id="IPR036704">
    <property type="entry name" value="RraA/RraA-like_sf"/>
</dbReference>
<dbReference type="NCBIfam" id="TIGR01935">
    <property type="entry name" value="NOT-MenG"/>
    <property type="match status" value="1"/>
</dbReference>
<dbReference type="NCBIfam" id="NF006875">
    <property type="entry name" value="PRK09372.1"/>
    <property type="match status" value="1"/>
</dbReference>
<dbReference type="PANTHER" id="PTHR33254">
    <property type="entry name" value="4-HYDROXY-4-METHYL-2-OXOGLUTARATE ALDOLASE 3-RELATED"/>
    <property type="match status" value="1"/>
</dbReference>
<dbReference type="PANTHER" id="PTHR33254:SF4">
    <property type="entry name" value="4-HYDROXY-4-METHYL-2-OXOGLUTARATE ALDOLASE 3-RELATED"/>
    <property type="match status" value="1"/>
</dbReference>
<dbReference type="Pfam" id="PF03737">
    <property type="entry name" value="RraA-like"/>
    <property type="match status" value="1"/>
</dbReference>
<dbReference type="SUPFAM" id="SSF89562">
    <property type="entry name" value="RraA-like"/>
    <property type="match status" value="1"/>
</dbReference>
<proteinExistence type="inferred from homology"/>
<reference key="1">
    <citation type="journal article" date="2004" name="Proc. Natl. Acad. Sci. U.S.A.">
        <title>Genomic plasticity of the causative agent of melioidosis, Burkholderia pseudomallei.</title>
        <authorList>
            <person name="Holden M.T.G."/>
            <person name="Titball R.W."/>
            <person name="Peacock S.J."/>
            <person name="Cerdeno-Tarraga A.-M."/>
            <person name="Atkins T."/>
            <person name="Crossman L.C."/>
            <person name="Pitt T."/>
            <person name="Churcher C."/>
            <person name="Mungall K.L."/>
            <person name="Bentley S.D."/>
            <person name="Sebaihia M."/>
            <person name="Thomson N.R."/>
            <person name="Bason N."/>
            <person name="Beacham I.R."/>
            <person name="Brooks K."/>
            <person name="Brown K.A."/>
            <person name="Brown N.F."/>
            <person name="Challis G.L."/>
            <person name="Cherevach I."/>
            <person name="Chillingworth T."/>
            <person name="Cronin A."/>
            <person name="Crossett B."/>
            <person name="Davis P."/>
            <person name="DeShazer D."/>
            <person name="Feltwell T."/>
            <person name="Fraser A."/>
            <person name="Hance Z."/>
            <person name="Hauser H."/>
            <person name="Holroyd S."/>
            <person name="Jagels K."/>
            <person name="Keith K.E."/>
            <person name="Maddison M."/>
            <person name="Moule S."/>
            <person name="Price C."/>
            <person name="Quail M.A."/>
            <person name="Rabbinowitsch E."/>
            <person name="Rutherford K."/>
            <person name="Sanders M."/>
            <person name="Simmonds M."/>
            <person name="Songsivilai S."/>
            <person name="Stevens K."/>
            <person name="Tumapa S."/>
            <person name="Vesaratchavest M."/>
            <person name="Whitehead S."/>
            <person name="Yeats C."/>
            <person name="Barrell B.G."/>
            <person name="Oyston P.C.F."/>
            <person name="Parkhill J."/>
        </authorList>
    </citation>
    <scope>NUCLEOTIDE SEQUENCE [LARGE SCALE GENOMIC DNA]</scope>
    <source>
        <strain>K96243</strain>
    </source>
</reference>
<gene>
    <name type="ordered locus">BPSL2194</name>
</gene>
<keyword id="KW-0456">Lyase</keyword>
<keyword id="KW-0479">Metal-binding</keyword>
<keyword id="KW-1185">Reference proteome</keyword>
<comment type="function">
    <text evidence="1">Catalyzes the aldol cleavage of 4-hydroxy-4-methyl-2-oxoglutarate (HMG) into 2 molecules of pyruvate. Also contains a secondary oxaloacetate (OAA) decarboxylase activity due to the common pyruvate enolate transition state formed following C-C bond cleavage in the retro-aldol and decarboxylation reactions (By similarity).</text>
</comment>
<comment type="catalytic activity">
    <reaction>
        <text>4-hydroxy-4-methyl-2-oxoglutarate = 2 pyruvate</text>
        <dbReference type="Rhea" id="RHEA:22748"/>
        <dbReference type="ChEBI" id="CHEBI:15361"/>
        <dbReference type="ChEBI" id="CHEBI:58276"/>
        <dbReference type="EC" id="4.1.3.17"/>
    </reaction>
</comment>
<comment type="catalytic activity">
    <reaction>
        <text>oxaloacetate + H(+) = pyruvate + CO2</text>
        <dbReference type="Rhea" id="RHEA:15641"/>
        <dbReference type="ChEBI" id="CHEBI:15361"/>
        <dbReference type="ChEBI" id="CHEBI:15378"/>
        <dbReference type="ChEBI" id="CHEBI:16452"/>
        <dbReference type="ChEBI" id="CHEBI:16526"/>
        <dbReference type="EC" id="4.1.1.112"/>
    </reaction>
</comment>
<comment type="cofactor">
    <cofactor evidence="1">
        <name>a divalent metal cation</name>
        <dbReference type="ChEBI" id="CHEBI:60240"/>
    </cofactor>
    <text evidence="1">Divalent metal cation.</text>
</comment>
<comment type="subunit">
    <text evidence="1">Homotrimer.</text>
</comment>
<comment type="similarity">
    <text evidence="2">Belongs to the class II aldolase/RraA-like family.</text>
</comment>
<accession>Q63SX7</accession>
<organism>
    <name type="scientific">Burkholderia pseudomallei (strain K96243)</name>
    <dbReference type="NCBI Taxonomy" id="272560"/>
    <lineage>
        <taxon>Bacteria</taxon>
        <taxon>Pseudomonadati</taxon>
        <taxon>Pseudomonadota</taxon>
        <taxon>Betaproteobacteria</taxon>
        <taxon>Burkholderiales</taxon>
        <taxon>Burkholderiaceae</taxon>
        <taxon>Burkholderia</taxon>
        <taxon>pseudomallei group</taxon>
    </lineage>
</organism>
<protein>
    <recommendedName>
        <fullName>Putative 4-hydroxy-4-methyl-2-oxoglutarate aldolase</fullName>
        <shortName>HMG aldolase</shortName>
        <ecNumber>4.1.3.17</ecNumber>
    </recommendedName>
    <alternativeName>
        <fullName>Oxaloacetate decarboxylase</fullName>
        <shortName>OAA decarboxylase</shortName>
        <ecNumber>4.1.1.112</ecNumber>
    </alternativeName>
    <alternativeName>
        <fullName>Regulator of ribonuclease activity homolog</fullName>
    </alternativeName>
    <alternativeName>
        <fullName>RraA-like protein</fullName>
    </alternativeName>
</protein>
<feature type="chain" id="PRO_0000209606" description="Putative 4-hydroxy-4-methyl-2-oxoglutarate aldolase">
    <location>
        <begin position="1"/>
        <end position="165"/>
    </location>
</feature>
<feature type="binding site" evidence="1">
    <location>
        <begin position="80"/>
        <end position="83"/>
    </location>
    <ligand>
        <name>substrate</name>
    </ligand>
</feature>
<feature type="binding site" evidence="1">
    <location>
        <position position="102"/>
    </location>
    <ligand>
        <name>substrate</name>
    </ligand>
</feature>
<feature type="binding site" evidence="1">
    <location>
        <position position="103"/>
    </location>
    <ligand>
        <name>a divalent metal cation</name>
        <dbReference type="ChEBI" id="CHEBI:60240"/>
    </ligand>
</feature>
<evidence type="ECO:0000250" key="1"/>
<evidence type="ECO:0000305" key="2"/>
<name>RRAAH_BURPS</name>